<dbReference type="EC" id="4.2.1.33" evidence="1"/>
<dbReference type="EMBL" id="CP000386">
    <property type="protein sequence ID" value="ABG03255.1"/>
    <property type="molecule type" value="Genomic_DNA"/>
</dbReference>
<dbReference type="RefSeq" id="WP_011563273.1">
    <property type="nucleotide sequence ID" value="NC_008148.1"/>
</dbReference>
<dbReference type="SMR" id="Q1AZC3"/>
<dbReference type="STRING" id="266117.Rxyl_0279"/>
<dbReference type="KEGG" id="rxy:Rxyl_0279"/>
<dbReference type="eggNOG" id="COG0066">
    <property type="taxonomic scope" value="Bacteria"/>
</dbReference>
<dbReference type="HOGENOM" id="CLU_081378_0_1_11"/>
<dbReference type="OrthoDB" id="9777465at2"/>
<dbReference type="PhylomeDB" id="Q1AZC3"/>
<dbReference type="UniPathway" id="UPA00048">
    <property type="reaction ID" value="UER00071"/>
</dbReference>
<dbReference type="Proteomes" id="UP000006637">
    <property type="component" value="Chromosome"/>
</dbReference>
<dbReference type="GO" id="GO:0009316">
    <property type="term" value="C:3-isopropylmalate dehydratase complex"/>
    <property type="evidence" value="ECO:0007669"/>
    <property type="project" value="InterPro"/>
</dbReference>
<dbReference type="GO" id="GO:0003861">
    <property type="term" value="F:3-isopropylmalate dehydratase activity"/>
    <property type="evidence" value="ECO:0007669"/>
    <property type="project" value="UniProtKB-UniRule"/>
</dbReference>
<dbReference type="GO" id="GO:0009098">
    <property type="term" value="P:L-leucine biosynthetic process"/>
    <property type="evidence" value="ECO:0007669"/>
    <property type="project" value="UniProtKB-UniRule"/>
</dbReference>
<dbReference type="CDD" id="cd01577">
    <property type="entry name" value="IPMI_Swivel"/>
    <property type="match status" value="1"/>
</dbReference>
<dbReference type="FunFam" id="3.20.19.10:FF:000003">
    <property type="entry name" value="3-isopropylmalate dehydratase small subunit"/>
    <property type="match status" value="1"/>
</dbReference>
<dbReference type="Gene3D" id="3.20.19.10">
    <property type="entry name" value="Aconitase, domain 4"/>
    <property type="match status" value="1"/>
</dbReference>
<dbReference type="HAMAP" id="MF_01031">
    <property type="entry name" value="LeuD_type1"/>
    <property type="match status" value="1"/>
</dbReference>
<dbReference type="InterPro" id="IPR004431">
    <property type="entry name" value="3-IsopropMal_deHydase_ssu"/>
</dbReference>
<dbReference type="InterPro" id="IPR015928">
    <property type="entry name" value="Aconitase/3IPM_dehydase_swvl"/>
</dbReference>
<dbReference type="InterPro" id="IPR000573">
    <property type="entry name" value="AconitaseA/IPMdHydase_ssu_swvl"/>
</dbReference>
<dbReference type="InterPro" id="IPR033940">
    <property type="entry name" value="IPMI_Swivel"/>
</dbReference>
<dbReference type="InterPro" id="IPR050075">
    <property type="entry name" value="LeuD"/>
</dbReference>
<dbReference type="NCBIfam" id="TIGR00171">
    <property type="entry name" value="leuD"/>
    <property type="match status" value="1"/>
</dbReference>
<dbReference type="NCBIfam" id="NF002458">
    <property type="entry name" value="PRK01641.1"/>
    <property type="match status" value="1"/>
</dbReference>
<dbReference type="PANTHER" id="PTHR43345:SF5">
    <property type="entry name" value="3-ISOPROPYLMALATE DEHYDRATASE SMALL SUBUNIT"/>
    <property type="match status" value="1"/>
</dbReference>
<dbReference type="PANTHER" id="PTHR43345">
    <property type="entry name" value="3-ISOPROPYLMALATE DEHYDRATASE SMALL SUBUNIT 2-RELATED-RELATED"/>
    <property type="match status" value="1"/>
</dbReference>
<dbReference type="Pfam" id="PF00694">
    <property type="entry name" value="Aconitase_C"/>
    <property type="match status" value="1"/>
</dbReference>
<dbReference type="SUPFAM" id="SSF52016">
    <property type="entry name" value="LeuD/IlvD-like"/>
    <property type="match status" value="1"/>
</dbReference>
<proteinExistence type="inferred from homology"/>
<name>LEUD_RUBXD</name>
<reference key="1">
    <citation type="submission" date="2006-06" db="EMBL/GenBank/DDBJ databases">
        <title>Complete sequence of Rubrobacter xylanophilus DSM 9941.</title>
        <authorList>
            <consortium name="US DOE Joint Genome Institute"/>
            <person name="Copeland A."/>
            <person name="Lucas S."/>
            <person name="Lapidus A."/>
            <person name="Barry K."/>
            <person name="Detter J.C."/>
            <person name="Glavina del Rio T."/>
            <person name="Hammon N."/>
            <person name="Israni S."/>
            <person name="Dalin E."/>
            <person name="Tice H."/>
            <person name="Pitluck S."/>
            <person name="Munk A.C."/>
            <person name="Brettin T."/>
            <person name="Bruce D."/>
            <person name="Han C."/>
            <person name="Tapia R."/>
            <person name="Gilna P."/>
            <person name="Schmutz J."/>
            <person name="Larimer F."/>
            <person name="Land M."/>
            <person name="Hauser L."/>
            <person name="Kyrpides N."/>
            <person name="Lykidis A."/>
            <person name="da Costa M.S."/>
            <person name="Rainey F.A."/>
            <person name="Empadinhas N."/>
            <person name="Jolivet E."/>
            <person name="Battista J.R."/>
            <person name="Richardson P."/>
        </authorList>
    </citation>
    <scope>NUCLEOTIDE SEQUENCE [LARGE SCALE GENOMIC DNA]</scope>
    <source>
        <strain>DSM 9941 / JCM 11954 / NBRC 16129 / PRD-1</strain>
    </source>
</reference>
<evidence type="ECO:0000255" key="1">
    <source>
        <dbReference type="HAMAP-Rule" id="MF_01031"/>
    </source>
</evidence>
<comment type="function">
    <text evidence="1">Catalyzes the isomerization between 2-isopropylmalate and 3-isopropylmalate, via the formation of 2-isopropylmaleate.</text>
</comment>
<comment type="catalytic activity">
    <reaction evidence="1">
        <text>(2R,3S)-3-isopropylmalate = (2S)-2-isopropylmalate</text>
        <dbReference type="Rhea" id="RHEA:32287"/>
        <dbReference type="ChEBI" id="CHEBI:1178"/>
        <dbReference type="ChEBI" id="CHEBI:35121"/>
        <dbReference type="EC" id="4.2.1.33"/>
    </reaction>
</comment>
<comment type="pathway">
    <text evidence="1">Amino-acid biosynthesis; L-leucine biosynthesis; L-leucine from 3-methyl-2-oxobutanoate: step 2/4.</text>
</comment>
<comment type="subunit">
    <text evidence="1">Heterodimer of LeuC and LeuD.</text>
</comment>
<comment type="similarity">
    <text evidence="1">Belongs to the LeuD family. LeuD type 1 subfamily.</text>
</comment>
<feature type="chain" id="PRO_1000063825" description="3-isopropylmalate dehydratase small subunit">
    <location>
        <begin position="1"/>
        <end position="195"/>
    </location>
</feature>
<sequence length="195" mass="22053">MEPVRKVEGKALPLGYSDVDTDQIVPSDALKRIERTGFGRFLFAEWREDPDFVLNKPEHQGAVVLIAGENFGCGSSREHAVWAVQDYGFGAVIAPSFADIFKNNCTKNGVLTVELPKETVRRLLEAVREDPEATVTVDLESRTVKGPGVETTFEIDDFVRYRLLNGLDDVGLTLRHEEDIERFERSRPRYMPRVL</sequence>
<keyword id="KW-0028">Amino-acid biosynthesis</keyword>
<keyword id="KW-0100">Branched-chain amino acid biosynthesis</keyword>
<keyword id="KW-0432">Leucine biosynthesis</keyword>
<keyword id="KW-0456">Lyase</keyword>
<keyword id="KW-1185">Reference proteome</keyword>
<protein>
    <recommendedName>
        <fullName evidence="1">3-isopropylmalate dehydratase small subunit</fullName>
        <ecNumber evidence="1">4.2.1.33</ecNumber>
    </recommendedName>
    <alternativeName>
        <fullName evidence="1">Alpha-IPM isomerase</fullName>
        <shortName evidence="1">IPMI</shortName>
    </alternativeName>
    <alternativeName>
        <fullName evidence="1">Isopropylmalate isomerase</fullName>
    </alternativeName>
</protein>
<accession>Q1AZC3</accession>
<gene>
    <name evidence="1" type="primary">leuD</name>
    <name type="ordered locus">Rxyl_0279</name>
</gene>
<organism>
    <name type="scientific">Rubrobacter xylanophilus (strain DSM 9941 / JCM 11954 / NBRC 16129 / PRD-1)</name>
    <dbReference type="NCBI Taxonomy" id="266117"/>
    <lineage>
        <taxon>Bacteria</taxon>
        <taxon>Bacillati</taxon>
        <taxon>Actinomycetota</taxon>
        <taxon>Rubrobacteria</taxon>
        <taxon>Rubrobacterales</taxon>
        <taxon>Rubrobacteraceae</taxon>
        <taxon>Rubrobacter</taxon>
    </lineage>
</organism>